<keyword id="KW-0067">ATP-binding</keyword>
<keyword id="KW-1003">Cell membrane</keyword>
<keyword id="KW-0325">Glycoprotein</keyword>
<keyword id="KW-0472">Membrane</keyword>
<keyword id="KW-0547">Nucleotide-binding</keyword>
<keyword id="KW-0597">Phosphoprotein</keyword>
<keyword id="KW-1185">Reference proteome</keyword>
<keyword id="KW-0677">Repeat</keyword>
<keyword id="KW-1278">Translocase</keyword>
<keyword id="KW-0812">Transmembrane</keyword>
<keyword id="KW-1133">Transmembrane helix</keyword>
<keyword id="KW-0813">Transport</keyword>
<reference key="1">
    <citation type="submission" date="1999-06" db="EMBL/GenBank/DDBJ databases">
        <title>Mus musculus mRNA for multidrug resistance-associated protein 6 (MRP6), complete cds.</title>
        <authorList>
            <person name="Morikawa A."/>
            <person name="Suzuki H."/>
            <person name="Hirohashi T."/>
            <person name="Sugiyama Y."/>
        </authorList>
    </citation>
    <scope>NUCLEOTIDE SEQUENCE [MRNA]</scope>
    <source>
        <strain>ddY</strain>
        <tissue>Liver</tissue>
    </source>
</reference>
<reference key="2">
    <citation type="journal article" date="2007" name="Proc. Natl. Acad. Sci. U.S.A.">
        <title>Identification of Abcc6 as the major causal gene for dystrophic cardiac calcification in mice through integrative genomics.</title>
        <authorList>
            <person name="Meng H."/>
            <person name="Vera I."/>
            <person name="Che N."/>
            <person name="Wang X."/>
            <person name="Wang S.S."/>
            <person name="Ingram-Drake L."/>
            <person name="Schadt E.E."/>
            <person name="Drake T.A."/>
            <person name="Lusis A.J."/>
        </authorList>
    </citation>
    <scope>NUCLEOTIDE SEQUENCE [MRNA]</scope>
    <source>
        <strain>C3H/HeJ</strain>
        <strain>DBA/2J</strain>
        <tissue>Kidney</tissue>
    </source>
</reference>
<reference key="3">
    <citation type="journal article" date="2009" name="PLoS Biol.">
        <title>Lineage-specific biology revealed by a finished genome assembly of the mouse.</title>
        <authorList>
            <person name="Church D.M."/>
            <person name="Goodstadt L."/>
            <person name="Hillier L.W."/>
            <person name="Zody M.C."/>
            <person name="Goldstein S."/>
            <person name="She X."/>
            <person name="Bult C.J."/>
            <person name="Agarwala R."/>
            <person name="Cherry J.L."/>
            <person name="DiCuccio M."/>
            <person name="Hlavina W."/>
            <person name="Kapustin Y."/>
            <person name="Meric P."/>
            <person name="Maglott D."/>
            <person name="Birtle Z."/>
            <person name="Marques A.C."/>
            <person name="Graves T."/>
            <person name="Zhou S."/>
            <person name="Teague B."/>
            <person name="Potamousis K."/>
            <person name="Churas C."/>
            <person name="Place M."/>
            <person name="Herschleb J."/>
            <person name="Runnheim R."/>
            <person name="Forrest D."/>
            <person name="Amos-Landgraf J."/>
            <person name="Schwartz D.C."/>
            <person name="Cheng Z."/>
            <person name="Lindblad-Toh K."/>
            <person name="Eichler E.E."/>
            <person name="Ponting C.P."/>
        </authorList>
    </citation>
    <scope>NUCLEOTIDE SEQUENCE [LARGE SCALE GENOMIC DNA]</scope>
    <source>
        <strain>C57BL/6J</strain>
    </source>
</reference>
<reference key="4">
    <citation type="journal article" date="2004" name="Genome Res.">
        <title>The status, quality, and expansion of the NIH full-length cDNA project: the Mammalian Gene Collection (MGC).</title>
        <authorList>
            <consortium name="The MGC Project Team"/>
        </authorList>
    </citation>
    <scope>NUCLEOTIDE SEQUENCE [LARGE SCALE MRNA] OF 685-1498</scope>
    <source>
        <strain>FVB/N</strain>
        <tissue>Liver</tissue>
    </source>
</reference>
<reference key="5">
    <citation type="journal article" date="2005" name="Hum. Mol. Genet.">
        <title>Disruption of Abcc6 in the mouse: novel insight in the pathogenesis of pseudoxanthoma elasticum.</title>
        <authorList>
            <person name="Gorgels T.G."/>
            <person name="Hu X."/>
            <person name="Scheffer G.L."/>
            <person name="van der Wal A.C."/>
            <person name="Toonstra J."/>
            <person name="de Jong P.T."/>
            <person name="van Kuppevelt T.H."/>
            <person name="Levelt C.N."/>
            <person name="de Wolf A."/>
            <person name="Loves W.J."/>
            <person name="Scheper R.J."/>
            <person name="Peek R."/>
            <person name="Bergen A.A."/>
        </authorList>
    </citation>
    <scope>DISRUPTION PHENOTYPE</scope>
    <scope>SUBCELLULAR LOCATION</scope>
</reference>
<reference key="6">
    <citation type="journal article" date="2007" name="Proc. Natl. Acad. Sci. U.S.A.">
        <title>Large-scale phosphorylation analysis of mouse liver.</title>
        <authorList>
            <person name="Villen J."/>
            <person name="Beausoleil S.A."/>
            <person name="Gerber S.A."/>
            <person name="Gygi S.P."/>
        </authorList>
    </citation>
    <scope>IDENTIFICATION BY MASS SPECTROMETRY [LARGE SCALE ANALYSIS]</scope>
    <source>
        <tissue>Liver</tissue>
    </source>
</reference>
<reference key="7">
    <citation type="journal article" date="2010" name="Cell">
        <title>A tissue-specific atlas of mouse protein phosphorylation and expression.</title>
        <authorList>
            <person name="Huttlin E.L."/>
            <person name="Jedrychowski M.P."/>
            <person name="Elias J.E."/>
            <person name="Goswami T."/>
            <person name="Rad R."/>
            <person name="Beausoleil S.A."/>
            <person name="Villen J."/>
            <person name="Haas W."/>
            <person name="Sowa M.E."/>
            <person name="Gygi S.P."/>
        </authorList>
    </citation>
    <scope>IDENTIFICATION BY MASS SPECTROMETRY [LARGE SCALE ANALYSIS]</scope>
    <source>
        <tissue>Liver</tissue>
    </source>
</reference>
<reference key="8">
    <citation type="journal article" date="2013" name="Circ. Res.">
        <title>ABCC6 is a basolateral plasma membrane protein.</title>
        <authorList>
            <person name="Pomozi V."/>
            <person name="Le Saux O."/>
            <person name="Brampton C."/>
            <person name="Apana A."/>
            <person name="Ilias A."/>
            <person name="Szeri F."/>
            <person name="Martin L."/>
            <person name="Monostory K."/>
            <person name="Paku S."/>
            <person name="Sarkadi B."/>
            <person name="Szakacs G."/>
            <person name="Varadi A."/>
        </authorList>
    </citation>
    <scope>SUBCELLULAR LOCATION</scope>
</reference>
<reference key="9">
    <citation type="journal article" date="2013" name="Proc. Natl. Acad. Sci. U.S.A.">
        <title>ABCC6 prevents ectopic mineralization seen in pseudoxanthoma elasticum by inducing cellular nucleotide release.</title>
        <authorList>
            <person name="Jansen R.S."/>
            <person name="Kuecuekosmanoglu A."/>
            <person name="de Haas M."/>
            <person name="Sapthu S."/>
            <person name="Otero J.A."/>
            <person name="Hegman I.E."/>
            <person name="Bergen A.A."/>
            <person name="Gorgels T.G."/>
            <person name="Borst P."/>
            <person name="van de Wetering K."/>
        </authorList>
    </citation>
    <scope>DISRUPTION PHENOTYPE</scope>
</reference>
<protein>
    <recommendedName>
        <fullName>ATP-binding cassette sub-family C member 6</fullName>
        <ecNumber evidence="2">7.6.2.-</ecNumber>
        <ecNumber evidence="3">7.6.2.3</ecNumber>
    </recommendedName>
    <alternativeName>
        <fullName>Multidrug resistance-associated protein 6</fullName>
    </alternativeName>
</protein>
<gene>
    <name type="primary">Abcc6</name>
    <name type="synonym">Mrp6</name>
</gene>
<comment type="function">
    <text evidence="3">ATP-dependent transporter of the ATP-binding cassette (ABC) family that actively extrudes physiological compounds, and xenobiotics from cells. Mediates ATP-dependent transport of glutathione conjugates such as leukotriene-c4 (LTC4) and N-ethylmaleimide S-glutathione (NEM-GS) (in vitro), and an anionic cyclopentapeptide endothelin antagonist, BQ-123. May contribute to regulate the transport of organic compounds in testes across the blood-testis-barrier (By similarity).</text>
</comment>
<comment type="function">
    <text evidence="3">Mediates the release of nucleoside triphosphates, predominantly ATP, into the circulation, where it is rapidly converted into AMP and the mineralization inhibitor inorganic pyrophosphate (PPi) by the ecto-enzyme ectonucleotide pyrophosphatase phosphodiesterase 1 (ENPP1), therefore playing a role in PPi homeostasis.</text>
</comment>
<comment type="catalytic activity">
    <reaction evidence="3">
        <text>an S-substituted glutathione(in) + ATP + H2O = an S-substituted glutathione(out) + ADP + phosphate + H(+)</text>
        <dbReference type="Rhea" id="RHEA:19121"/>
        <dbReference type="ChEBI" id="CHEBI:15377"/>
        <dbReference type="ChEBI" id="CHEBI:15378"/>
        <dbReference type="ChEBI" id="CHEBI:30616"/>
        <dbReference type="ChEBI" id="CHEBI:43474"/>
        <dbReference type="ChEBI" id="CHEBI:90779"/>
        <dbReference type="ChEBI" id="CHEBI:456216"/>
        <dbReference type="EC" id="7.6.2.3"/>
    </reaction>
    <physiologicalReaction direction="left-to-right" evidence="3">
        <dbReference type="Rhea" id="RHEA:19122"/>
    </physiologicalReaction>
</comment>
<comment type="catalytic activity">
    <reaction evidence="3">
        <text>leukotriene C4(in) + ATP + H2O = leukotriene C4(out) + ADP + phosphate + H(+)</text>
        <dbReference type="Rhea" id="RHEA:38963"/>
        <dbReference type="ChEBI" id="CHEBI:15377"/>
        <dbReference type="ChEBI" id="CHEBI:15378"/>
        <dbReference type="ChEBI" id="CHEBI:30616"/>
        <dbReference type="ChEBI" id="CHEBI:43474"/>
        <dbReference type="ChEBI" id="CHEBI:57973"/>
        <dbReference type="ChEBI" id="CHEBI:456216"/>
    </reaction>
    <physiologicalReaction direction="left-to-right" evidence="3">
        <dbReference type="Rhea" id="RHEA:38964"/>
    </physiologicalReaction>
</comment>
<comment type="subcellular location">
    <subcellularLocation>
        <location evidence="8 9">Basolateral cell membrane</location>
        <topology evidence="4 9">Multi-pass membrane protein</topology>
    </subcellularLocation>
    <subcellularLocation>
        <location evidence="3">Basal cell membrane</location>
        <topology evidence="4">Multi-pass membrane protein</topology>
    </subcellularLocation>
</comment>
<comment type="PTM">
    <text evidence="3">Glycosylated.</text>
</comment>
<comment type="disruption phenotype">
    <text evidence="8 10">Deficient mice spontaneously develop calcification and elastic fiber abnormalities in blood vessels and Bruch's membrane in the eye, whereas no clear changes were seen in the extracellular matrix of the skin. Calcification of blood vessels is most prominent in small arteries in the cortex of the kidney, but in old mice, it also occurs in other organs and in the aorta and vena cava (PubMed:15888484). Mice have reduced inorganic pyrophosphate (PPi) plasma levels, a strong inhibitor of mineralization (PubMed:24277820).</text>
</comment>
<comment type="similarity">
    <text evidence="11">Belongs to the ABC transporter superfamily. ABCC family. Conjugate transporter (TC 3.A.1.208) subfamily.</text>
</comment>
<proteinExistence type="evidence at protein level"/>
<accession>Q9R1S7</accession>
<accession>A2TAJ0</accession>
<accession>A2TAJ1</accession>
<accession>F8VPT2</accession>
<accession>Q80YB6</accession>
<name>MRP6_MOUSE</name>
<feature type="chain" id="PRO_0000093367" description="ATP-binding cassette sub-family C member 6">
    <location>
        <begin position="1"/>
        <end position="1498"/>
    </location>
</feature>
<feature type="topological domain" description="Extracellular" evidence="1">
    <location>
        <begin position="1"/>
        <end position="37"/>
    </location>
</feature>
<feature type="transmembrane region" description="Helical; Name=1" evidence="6">
    <location>
        <begin position="38"/>
        <end position="58"/>
    </location>
</feature>
<feature type="topological domain" description="Cytoplasmic" evidence="1">
    <location>
        <begin position="59"/>
        <end position="78"/>
    </location>
</feature>
<feature type="transmembrane region" description="Helical; Name=2" evidence="6">
    <location>
        <begin position="79"/>
        <end position="99"/>
    </location>
</feature>
<feature type="topological domain" description="Extracellular" evidence="1">
    <location>
        <begin position="100"/>
        <end position="104"/>
    </location>
</feature>
<feature type="transmembrane region" description="Helical; Name=3" evidence="6">
    <location>
        <begin position="105"/>
        <end position="125"/>
    </location>
</feature>
<feature type="topological domain" description="Cytoplasmic" evidence="1">
    <location>
        <begin position="126"/>
        <end position="137"/>
    </location>
</feature>
<feature type="transmembrane region" description="Helical; Name=4" evidence="6">
    <location>
        <begin position="138"/>
        <end position="155"/>
    </location>
</feature>
<feature type="topological domain" description="Extracellular" evidence="1">
    <location>
        <begin position="156"/>
        <end position="173"/>
    </location>
</feature>
<feature type="transmembrane region" description="Helical; Name=5" evidence="6">
    <location>
        <begin position="174"/>
        <end position="194"/>
    </location>
</feature>
<feature type="topological domain" description="Cytoplasmic" evidence="1">
    <location>
        <begin position="195"/>
        <end position="300"/>
    </location>
</feature>
<feature type="transmembrane region" description="Helical; Name=6" evidence="6">
    <location>
        <begin position="301"/>
        <end position="321"/>
    </location>
</feature>
<feature type="topological domain" description="Extracellular" evidence="1">
    <location>
        <begin position="322"/>
        <end position="347"/>
    </location>
</feature>
<feature type="transmembrane region" description="Helical; Name=7" evidence="6">
    <location>
        <begin position="348"/>
        <end position="368"/>
    </location>
</feature>
<feature type="topological domain" description="Cytoplasmic" evidence="1">
    <location>
        <begin position="369"/>
        <end position="424"/>
    </location>
</feature>
<feature type="transmembrane region" description="Helical; Name=8" evidence="6">
    <location>
        <begin position="425"/>
        <end position="445"/>
    </location>
</feature>
<feature type="topological domain" description="Extracellular" evidence="1">
    <location>
        <begin position="446"/>
        <end position="448"/>
    </location>
</feature>
<feature type="transmembrane region" description="Helical; Name=9" evidence="6">
    <location>
        <begin position="449"/>
        <end position="469"/>
    </location>
</feature>
<feature type="topological domain" description="Cytoplasmic" evidence="1">
    <location>
        <begin position="470"/>
        <end position="531"/>
    </location>
</feature>
<feature type="transmembrane region" description="Helical; Name=10" evidence="6">
    <location>
        <begin position="532"/>
        <end position="552"/>
    </location>
</feature>
<feature type="topological domain" description="Extracellular" evidence="1">
    <location>
        <begin position="553"/>
        <end position="574"/>
    </location>
</feature>
<feature type="transmembrane region" description="Helical; Name=11" evidence="6">
    <location>
        <begin position="575"/>
        <end position="595"/>
    </location>
</feature>
<feature type="topological domain" description="Cytoplasmic" evidence="1">
    <location>
        <begin position="596"/>
        <end position="934"/>
    </location>
</feature>
<feature type="transmembrane region" description="Helical; Name=12" evidence="6">
    <location>
        <begin position="935"/>
        <end position="955"/>
    </location>
</feature>
<feature type="topological domain" description="Extracellular" evidence="1">
    <location>
        <begin position="956"/>
        <end position="992"/>
    </location>
</feature>
<feature type="transmembrane region" description="Helical; Name=13" evidence="6">
    <location>
        <begin position="993"/>
        <end position="1013"/>
    </location>
</feature>
<feature type="topological domain" description="Cytoplasmic" evidence="1">
    <location>
        <begin position="1014"/>
        <end position="1056"/>
    </location>
</feature>
<feature type="transmembrane region" description="Helical; Name=14" evidence="6">
    <location>
        <begin position="1057"/>
        <end position="1077"/>
    </location>
</feature>
<feature type="topological domain" description="Extracellular" evidence="1">
    <location>
        <position position="1078"/>
    </location>
</feature>
<feature type="transmembrane region" description="Helical; Name=15" evidence="6">
    <location>
        <begin position="1079"/>
        <end position="1099"/>
    </location>
</feature>
<feature type="topological domain" description="Cytoplasmic" evidence="1">
    <location>
        <begin position="1100"/>
        <end position="1170"/>
    </location>
</feature>
<feature type="transmembrane region" description="Helical; Name=16" evidence="6">
    <location>
        <begin position="1171"/>
        <end position="1191"/>
    </location>
</feature>
<feature type="topological domain" description="Extracellular" evidence="1">
    <location>
        <begin position="1192"/>
        <end position="1193"/>
    </location>
</feature>
<feature type="transmembrane region" description="Helical; Name=17" evidence="6">
    <location>
        <begin position="1194"/>
        <end position="1214"/>
    </location>
</feature>
<feature type="topological domain" description="Cytoplasmic" evidence="1">
    <location>
        <begin position="1215"/>
        <end position="1498"/>
    </location>
</feature>
<feature type="domain" description="ABC transmembrane type-1 1" evidence="6">
    <location>
        <begin position="309"/>
        <end position="592"/>
    </location>
</feature>
<feature type="domain" description="ABC transporter 1" evidence="5">
    <location>
        <begin position="627"/>
        <end position="851"/>
    </location>
</feature>
<feature type="domain" description="ABC transmembrane type-1 2" evidence="6">
    <location>
        <begin position="942"/>
        <end position="1223"/>
    </location>
</feature>
<feature type="domain" description="ABC transporter 2" evidence="5">
    <location>
        <begin position="1260"/>
        <end position="1494"/>
    </location>
</feature>
<feature type="region of interest" description="Disordered" evidence="7">
    <location>
        <begin position="855"/>
        <end position="910"/>
    </location>
</feature>
<feature type="binding site" evidence="5">
    <location>
        <begin position="661"/>
        <end position="668"/>
    </location>
    <ligand>
        <name>ATP</name>
        <dbReference type="ChEBI" id="CHEBI:30616"/>
        <label>1</label>
    </ligand>
</feature>
<feature type="binding site" evidence="5">
    <location>
        <begin position="1294"/>
        <end position="1301"/>
    </location>
    <ligand>
        <name>ATP</name>
        <dbReference type="ChEBI" id="CHEBI:30616"/>
        <label>2</label>
    </ligand>
</feature>
<feature type="modified residue" description="Phosphoserine" evidence="3">
    <location>
        <position position="1281"/>
    </location>
</feature>
<feature type="glycosylation site" description="N-linked (GlcNAc...) asparagine" evidence="4">
    <location>
        <position position="21"/>
    </location>
</feature>
<feature type="glycosylation site" description="N-linked (GlcNAc...) asparagine" evidence="4">
    <location>
        <position position="341"/>
    </location>
</feature>
<feature type="sequence conflict" description="In Ref. 1; BAA83820." evidence="11" ref="1">
    <original>R</original>
    <variation>S</variation>
    <location>
        <position position="3"/>
    </location>
</feature>
<feature type="sequence conflict" description="In Ref. 2; ABM89087/ABM89088." evidence="11" ref="2">
    <original>A</original>
    <variation>V</variation>
    <location>
        <position position="28"/>
    </location>
</feature>
<feature type="sequence conflict" description="In Ref. 2; ABM89087/ABM89088." evidence="11" ref="2">
    <original>V</original>
    <variation>M</variation>
    <location>
        <position position="95"/>
    </location>
</feature>
<feature type="sequence conflict" description="In Ref. 2; ABM89087." evidence="11" ref="2">
    <original>L</original>
    <variation>Q</variation>
    <location>
        <position position="127"/>
    </location>
</feature>
<feature type="sequence conflict" description="In Ref. 2; ABM89087/ABM89088." evidence="11" ref="2">
    <original>S</original>
    <variation>A</variation>
    <location>
        <position position="138"/>
    </location>
</feature>
<feature type="sequence conflict" description="In Ref. 2; ABM89087/ABM89088." evidence="11" ref="2">
    <original>I</original>
    <variation>V</variation>
    <location>
        <position position="151"/>
    </location>
</feature>
<feature type="sequence conflict" description="In Ref. 1; BAA83820." evidence="11" ref="1">
    <original>F</original>
    <variation>L</variation>
    <location>
        <position position="166"/>
    </location>
</feature>
<feature type="sequence conflict" description="In Ref. 2; ABM89087." evidence="11" ref="2">
    <original>R</original>
    <variation>G</variation>
    <location>
        <position position="231"/>
    </location>
</feature>
<feature type="sequence conflict" description="In Ref. 2; ABM89087." evidence="11" ref="2">
    <original>L</original>
    <variation>P</variation>
    <location>
        <position position="528"/>
    </location>
</feature>
<feature type="sequence conflict" description="In Ref. 2; ABM89087." evidence="11" ref="2">
    <original>V</original>
    <variation>L</variation>
    <location>
        <position position="572"/>
    </location>
</feature>
<feature type="sequence conflict" description="In Ref. 2; ABM89087/ABM89088." evidence="11" ref="2">
    <original>R</original>
    <variation>C</variation>
    <location>
        <position position="621"/>
    </location>
</feature>
<feature type="sequence conflict" description="In Ref. 1; BAA83820 and 2; ABM89087/ABM89088." evidence="11" ref="1 2">
    <original>V</original>
    <variation>A</variation>
    <location>
        <position position="706"/>
    </location>
</feature>
<feature type="sequence conflict" description="In Ref. 2; ABM89087/ABM89088." evidence="11" ref="2">
    <original>K</original>
    <variation>R</variation>
    <location>
        <position position="767"/>
    </location>
</feature>
<feature type="sequence conflict" description="In Ref. 2; ABM89087." evidence="11" ref="2">
    <original>L</original>
    <variation>P</variation>
    <location>
        <position position="839"/>
    </location>
</feature>
<feature type="sequence conflict" description="In Ref. 1; BAA83820 and 2; ABM89087/ABM89088." evidence="11" ref="1 2">
    <original>T</original>
    <variation>I</variation>
    <location>
        <position position="927"/>
    </location>
</feature>
<feature type="sequence conflict" description="In Ref. 2; ABM89088." evidence="11" ref="2">
    <original>L</original>
    <variation>Q</variation>
    <location>
        <position position="1058"/>
    </location>
</feature>
<feature type="sequence conflict" description="In Ref. 2; ABM89087/ABM89088." evidence="11" ref="2">
    <original>A</original>
    <variation>T</variation>
    <location>
        <position position="1368"/>
    </location>
</feature>
<feature type="sequence conflict" description="In Ref. 2; ABM89087." evidence="11" ref="2">
    <original>L</original>
    <variation>P</variation>
    <location>
        <position position="1370"/>
    </location>
</feature>
<feature type="sequence conflict" description="In Ref. 1; BAA83820." evidence="11" ref="1">
    <original>Q</original>
    <variation>H</variation>
    <location>
        <position position="1401"/>
    </location>
</feature>
<feature type="sequence conflict" description="In Ref. 1; BAA83820." evidence="11" ref="1">
    <original>V</original>
    <variation>L</variation>
    <location>
        <position position="1448"/>
    </location>
</feature>
<feature type="sequence conflict" description="In Ref. 2; ABM89088." evidence="11" ref="2">
    <original>I</original>
    <variation>T</variation>
    <location>
        <position position="1451"/>
    </location>
</feature>
<feature type="sequence conflict" description="In Ref. 1; BAA83820." evidence="11" ref="1">
    <original>S</original>
    <variation>N</variation>
    <location>
        <position position="1477"/>
    </location>
</feature>
<evidence type="ECO:0000250" key="1"/>
<evidence type="ECO:0000250" key="2">
    <source>
        <dbReference type="UniProtKB" id="O88269"/>
    </source>
</evidence>
<evidence type="ECO:0000250" key="3">
    <source>
        <dbReference type="UniProtKB" id="O95255"/>
    </source>
</evidence>
<evidence type="ECO:0000255" key="4"/>
<evidence type="ECO:0000255" key="5">
    <source>
        <dbReference type="PROSITE-ProRule" id="PRU00434"/>
    </source>
</evidence>
<evidence type="ECO:0000255" key="6">
    <source>
        <dbReference type="PROSITE-ProRule" id="PRU00441"/>
    </source>
</evidence>
<evidence type="ECO:0000256" key="7">
    <source>
        <dbReference type="SAM" id="MobiDB-lite"/>
    </source>
</evidence>
<evidence type="ECO:0000269" key="8">
    <source>
    </source>
</evidence>
<evidence type="ECO:0000269" key="9">
    <source>
    </source>
</evidence>
<evidence type="ECO:0000269" key="10">
    <source>
    </source>
</evidence>
<evidence type="ECO:0000305" key="11"/>
<sequence length="1498" mass="164857">MNRGRSMATPGEQCAGLRVWNQTEQEPAAYHLLSLCFVRAASSWVPPMYLWVLGPIYLLYIHRHGRCYLRMSHLFKTKMVLGLALILLYTFNVAVPLWRIHQGVPQAPELLIHPTVWLTTMSFATFLIHMERRKGVRSSGVLFGYWLLCCILPGINTVQQASAGNFRQEPLHHLATYLCLSLVVAELVLSCLVDQPPFFSEDSQPLNPCPEAEASFPSKAMFWWASGLLWRGYKKLLGPKDLWSLGRENSSEELVSQLEREWRRSCNGLPGHKGHSSVGAPETEAFLQPERSQRGPLLRAIWRVFRSTFLLGTLSLVISDAFRFAVPKLLSLFLEFMGDRNSSAWTGWLLAVLMFAAACLQTLFEQQHMYRAKVLQMRLRTAITGLVYRKVLVLSSGSRKSSAAGDVVNLVSVDIQRLAESIIYLNGLWLLFLWIFVCFVYLWQLLGPSALTAVAVFLSLLPLNFFITKKRGFHQEEQMRQKASRARLTSSMLRTVRTIKSHGWEHAFLERLLHIRGQELSALKTSTLLFSVSLVSFQVSTFLVALVVFAVHTLVAEDNAMDAEKAFVTLTVLSILNKAQAFLPFSVHCIVQARVSFDRLAAFLCLEEVDPNGMIASNSRRSSKDRISVHNGTFAWSQESPPCLHGINLTVPQGCLLAVVGPVGAGKSSLLSALLGELLKVEGSVSIEGSVAYVPQEAWVQNTSVVENVCFRQELDLPWLQKVLDACALGSDVASFPAGVHTPIGEQGMNLSGGQKQRLSLARAVYKKAAIYLLDDPLAALDAHVSQQVFKQVIGPSGLLQGTTRILVTHTLHVLPQADRILVLANGTIAEMGSYQDLLQRNGALVGLLDGARQPAGTHDAATSDDLGGFPGGGRPTCRPDRPRPTEAAPVKGRSTSEVQMEASLDDPEATGLTAEEDSVRYGRVKTTIYLSYLRAVGTPLCTYTLFLFLCQQVASFSQGYWLSLWADDPVVDGRQMHAALRGWVFGLLGCLQAIGLFASMAAVFLGGARASGLLFRSLLWDVARSPIGFFERTPVGNLLNRFSKETDTVDVDIPDKLRSLLTYAFGLLEVGLAVTMATPLAIVAILPLMVLYAGFQSLYVATSCQLRRLESARYSSVCSHMAETFQGSLVVRAFRAQASFTAQHDALMDENQRVSFPKLVADRWLATNLELLGNGLVFVAATCAVLSKAHLSAGLVGFSVSAALQVTQTLQWVVRSWTDLENSMVAVERVQDYARIPKEAPWRLPTCAAQPLWPCGGQIEFRDFGLRHRPELPLAVQGVSLKIHAGEKVGIVGRTGAGKSSLAWGLLRLQEAAEGNIWIDGVPITHVGLHTLRSRITIIPQDPVLFPGSLRMNLDLLQEHTDEGIWAALETVQLKAFVTSLPGQLQYECAGQGDDLSVGQKQLLCLARALLRKTQILILDEATASVDPGTEMQMQAALERWFTQCTVLLIAHRLRSVMDCARVLVMDEGQVAESGSPAQLLAQKGLFYRLAHESGLA</sequence>
<organism>
    <name type="scientific">Mus musculus</name>
    <name type="common">Mouse</name>
    <dbReference type="NCBI Taxonomy" id="10090"/>
    <lineage>
        <taxon>Eukaryota</taxon>
        <taxon>Metazoa</taxon>
        <taxon>Chordata</taxon>
        <taxon>Craniata</taxon>
        <taxon>Vertebrata</taxon>
        <taxon>Euteleostomi</taxon>
        <taxon>Mammalia</taxon>
        <taxon>Eutheria</taxon>
        <taxon>Euarchontoglires</taxon>
        <taxon>Glires</taxon>
        <taxon>Rodentia</taxon>
        <taxon>Myomorpha</taxon>
        <taxon>Muroidea</taxon>
        <taxon>Muridae</taxon>
        <taxon>Murinae</taxon>
        <taxon>Mus</taxon>
        <taxon>Mus</taxon>
    </lineage>
</organism>
<dbReference type="EC" id="7.6.2.-" evidence="2"/>
<dbReference type="EC" id="7.6.2.3" evidence="3"/>
<dbReference type="EMBL" id="AB028737">
    <property type="protein sequence ID" value="BAA83820.1"/>
    <property type="molecule type" value="mRNA"/>
</dbReference>
<dbReference type="EMBL" id="EF109740">
    <property type="protein sequence ID" value="ABM89087.1"/>
    <property type="molecule type" value="mRNA"/>
</dbReference>
<dbReference type="EMBL" id="EF109741">
    <property type="protein sequence ID" value="ABM89088.1"/>
    <property type="molecule type" value="mRNA"/>
</dbReference>
<dbReference type="EMBL" id="AC115036">
    <property type="status" value="NOT_ANNOTATED_CDS"/>
    <property type="molecule type" value="Genomic_DNA"/>
</dbReference>
<dbReference type="EMBL" id="BC049980">
    <property type="protein sequence ID" value="AAH49980.1"/>
    <property type="molecule type" value="mRNA"/>
</dbReference>
<dbReference type="CCDS" id="CCDS21272.1"/>
<dbReference type="RefSeq" id="NP_061265.2">
    <property type="nucleotide sequence ID" value="NM_018795.2"/>
</dbReference>
<dbReference type="SMR" id="Q9R1S7"/>
<dbReference type="FunCoup" id="Q9R1S7">
    <property type="interactions" value="74"/>
</dbReference>
<dbReference type="STRING" id="10090.ENSMUSP00000002850"/>
<dbReference type="GlyCosmos" id="Q9R1S7">
    <property type="glycosylation" value="2 sites, No reported glycans"/>
</dbReference>
<dbReference type="GlyGen" id="Q9R1S7">
    <property type="glycosylation" value="3 sites"/>
</dbReference>
<dbReference type="iPTMnet" id="Q9R1S7"/>
<dbReference type="PhosphoSitePlus" id="Q9R1S7"/>
<dbReference type="SwissPalm" id="Q9R1S7"/>
<dbReference type="jPOST" id="Q9R1S7"/>
<dbReference type="PaxDb" id="10090-ENSMUSP00000002850"/>
<dbReference type="PeptideAtlas" id="Q9R1S7"/>
<dbReference type="ProteomicsDB" id="291411"/>
<dbReference type="Antibodypedia" id="11866">
    <property type="antibodies" value="167 antibodies from 32 providers"/>
</dbReference>
<dbReference type="DNASU" id="27421"/>
<dbReference type="Ensembl" id="ENSMUST00000002850.8">
    <property type="protein sequence ID" value="ENSMUSP00000002850.6"/>
    <property type="gene ID" value="ENSMUSG00000030834.8"/>
</dbReference>
<dbReference type="GeneID" id="27421"/>
<dbReference type="KEGG" id="mmu:27421"/>
<dbReference type="UCSC" id="uc009gya.1">
    <property type="organism name" value="mouse"/>
</dbReference>
<dbReference type="AGR" id="MGI:1351634"/>
<dbReference type="CTD" id="368"/>
<dbReference type="MGI" id="MGI:1351634">
    <property type="gene designation" value="Abcc6"/>
</dbReference>
<dbReference type="VEuPathDB" id="HostDB:ENSMUSG00000030834"/>
<dbReference type="eggNOG" id="KOG0054">
    <property type="taxonomic scope" value="Eukaryota"/>
</dbReference>
<dbReference type="GeneTree" id="ENSGT00940000157145"/>
<dbReference type="HOGENOM" id="CLU_000604_27_3_1"/>
<dbReference type="InParanoid" id="Q9R1S7"/>
<dbReference type="OMA" id="VAQNDTH"/>
<dbReference type="OrthoDB" id="6500128at2759"/>
<dbReference type="PhylomeDB" id="Q9R1S7"/>
<dbReference type="TreeFam" id="TF105199"/>
<dbReference type="Reactome" id="R-MMU-382556">
    <property type="pathway name" value="ABC-family proteins mediated transport"/>
</dbReference>
<dbReference type="BioGRID-ORCS" id="27421">
    <property type="hits" value="3 hits in 78 CRISPR screens"/>
</dbReference>
<dbReference type="ChiTaRS" id="Abcc6">
    <property type="organism name" value="mouse"/>
</dbReference>
<dbReference type="PRO" id="PR:Q9R1S7"/>
<dbReference type="Proteomes" id="UP000000589">
    <property type="component" value="Chromosome 7"/>
</dbReference>
<dbReference type="RNAct" id="Q9R1S7">
    <property type="molecule type" value="protein"/>
</dbReference>
<dbReference type="Bgee" id="ENSMUSG00000030834">
    <property type="expression patterns" value="Expressed in liver and 40 other cell types or tissues"/>
</dbReference>
<dbReference type="ExpressionAtlas" id="Q9R1S7">
    <property type="expression patterns" value="baseline and differential"/>
</dbReference>
<dbReference type="GO" id="GO:0016324">
    <property type="term" value="C:apical plasma membrane"/>
    <property type="evidence" value="ECO:0007669"/>
    <property type="project" value="Ensembl"/>
</dbReference>
<dbReference type="GO" id="GO:0016323">
    <property type="term" value="C:basolateral plasma membrane"/>
    <property type="evidence" value="ECO:0000314"/>
    <property type="project" value="UniProtKB"/>
</dbReference>
<dbReference type="GO" id="GO:0005576">
    <property type="term" value="C:extracellular region"/>
    <property type="evidence" value="ECO:0000266"/>
    <property type="project" value="MGI"/>
</dbReference>
<dbReference type="GO" id="GO:0016328">
    <property type="term" value="C:lateral plasma membrane"/>
    <property type="evidence" value="ECO:0007669"/>
    <property type="project" value="Ensembl"/>
</dbReference>
<dbReference type="GO" id="GO:0005654">
    <property type="term" value="C:nucleoplasm"/>
    <property type="evidence" value="ECO:0007669"/>
    <property type="project" value="Ensembl"/>
</dbReference>
<dbReference type="GO" id="GO:0015431">
    <property type="term" value="F:ABC-type glutathione S-conjugate transporter activity"/>
    <property type="evidence" value="ECO:0000250"/>
    <property type="project" value="UniProtKB"/>
</dbReference>
<dbReference type="GO" id="GO:0008559">
    <property type="term" value="F:ABC-type xenobiotic transporter activity"/>
    <property type="evidence" value="ECO:0007669"/>
    <property type="project" value="Ensembl"/>
</dbReference>
<dbReference type="GO" id="GO:0005524">
    <property type="term" value="F:ATP binding"/>
    <property type="evidence" value="ECO:0007669"/>
    <property type="project" value="UniProtKB-KW"/>
</dbReference>
<dbReference type="GO" id="GO:0016887">
    <property type="term" value="F:ATP hydrolysis activity"/>
    <property type="evidence" value="ECO:0007669"/>
    <property type="project" value="Ensembl"/>
</dbReference>
<dbReference type="GO" id="GO:0042626">
    <property type="term" value="F:ATPase-coupled transmembrane transporter activity"/>
    <property type="evidence" value="ECO:0000250"/>
    <property type="project" value="UniProtKB"/>
</dbReference>
<dbReference type="GO" id="GO:0030504">
    <property type="term" value="F:inorganic diphosphate transmembrane transporter activity"/>
    <property type="evidence" value="ECO:0007669"/>
    <property type="project" value="Ensembl"/>
</dbReference>
<dbReference type="GO" id="GO:0046034">
    <property type="term" value="P:ATP metabolic process"/>
    <property type="evidence" value="ECO:0000266"/>
    <property type="project" value="MGI"/>
</dbReference>
<dbReference type="GO" id="GO:0015867">
    <property type="term" value="P:ATP transport"/>
    <property type="evidence" value="ECO:0000250"/>
    <property type="project" value="UniProtKB"/>
</dbReference>
<dbReference type="GO" id="GO:0055074">
    <property type="term" value="P:calcium ion homeostasis"/>
    <property type="evidence" value="ECO:0000315"/>
    <property type="project" value="MGI"/>
</dbReference>
<dbReference type="GO" id="GO:0010467">
    <property type="term" value="P:gene expression"/>
    <property type="evidence" value="ECO:0000266"/>
    <property type="project" value="MGI"/>
</dbReference>
<dbReference type="GO" id="GO:0140928">
    <property type="term" value="P:inhibition of non-skeletal tissue mineralization"/>
    <property type="evidence" value="ECO:0000315"/>
    <property type="project" value="MGI"/>
</dbReference>
<dbReference type="GO" id="GO:0030505">
    <property type="term" value="P:inorganic diphosphate transport"/>
    <property type="evidence" value="ECO:0000314"/>
    <property type="project" value="MGI"/>
</dbReference>
<dbReference type="GO" id="GO:0030643">
    <property type="term" value="P:intracellular phosphate ion homeostasis"/>
    <property type="evidence" value="ECO:0000315"/>
    <property type="project" value="UniProtKB"/>
</dbReference>
<dbReference type="GO" id="GO:0071716">
    <property type="term" value="P:leukotriene transport"/>
    <property type="evidence" value="ECO:0000250"/>
    <property type="project" value="UniProtKB"/>
</dbReference>
<dbReference type="GO" id="GO:0055062">
    <property type="term" value="P:phosphate ion homeostasis"/>
    <property type="evidence" value="ECO:0000314"/>
    <property type="project" value="MGI"/>
</dbReference>
<dbReference type="GO" id="GO:0032026">
    <property type="term" value="P:response to magnesium ion"/>
    <property type="evidence" value="ECO:0000315"/>
    <property type="project" value="MGI"/>
</dbReference>
<dbReference type="GO" id="GO:1904383">
    <property type="term" value="P:response to sodium phosphate"/>
    <property type="evidence" value="ECO:0000315"/>
    <property type="project" value="MGI"/>
</dbReference>
<dbReference type="GO" id="GO:0006855">
    <property type="term" value="P:xenobiotic transmembrane transport"/>
    <property type="evidence" value="ECO:0007669"/>
    <property type="project" value="Ensembl"/>
</dbReference>
<dbReference type="CDD" id="cd18595">
    <property type="entry name" value="ABC_6TM_MRP1_2_3_6_D1_like"/>
    <property type="match status" value="1"/>
</dbReference>
<dbReference type="CDD" id="cd18603">
    <property type="entry name" value="ABC_6TM_MRP1_2_3_6_D2_like"/>
    <property type="match status" value="1"/>
</dbReference>
<dbReference type="CDD" id="cd03250">
    <property type="entry name" value="ABCC_MRP_domain1"/>
    <property type="match status" value="1"/>
</dbReference>
<dbReference type="CDD" id="cd03244">
    <property type="entry name" value="ABCC_MRP_domain2"/>
    <property type="match status" value="1"/>
</dbReference>
<dbReference type="FunFam" id="3.40.50.300:FF:000450">
    <property type="entry name" value="ABC transporter C family member 2"/>
    <property type="match status" value="1"/>
</dbReference>
<dbReference type="FunFam" id="1.20.1560.10:FF:000032">
    <property type="entry name" value="ATP-binding cassette sub-family C member 6"/>
    <property type="match status" value="1"/>
</dbReference>
<dbReference type="FunFam" id="1.20.1560.10:FF:000001">
    <property type="entry name" value="ATP-binding cassette subfamily C member 1"/>
    <property type="match status" value="1"/>
</dbReference>
<dbReference type="FunFam" id="3.40.50.300:FF:001147">
    <property type="entry name" value="multidrug resistance-associated protein 6 isoform X1"/>
    <property type="match status" value="1"/>
</dbReference>
<dbReference type="Gene3D" id="1.20.1560.10">
    <property type="entry name" value="ABC transporter type 1, transmembrane domain"/>
    <property type="match status" value="2"/>
</dbReference>
<dbReference type="Gene3D" id="3.40.50.300">
    <property type="entry name" value="P-loop containing nucleotide triphosphate hydrolases"/>
    <property type="match status" value="2"/>
</dbReference>
<dbReference type="InterPro" id="IPR003593">
    <property type="entry name" value="AAA+_ATPase"/>
</dbReference>
<dbReference type="InterPro" id="IPR011527">
    <property type="entry name" value="ABC1_TM_dom"/>
</dbReference>
<dbReference type="InterPro" id="IPR036640">
    <property type="entry name" value="ABC1_TM_sf"/>
</dbReference>
<dbReference type="InterPro" id="IPR003439">
    <property type="entry name" value="ABC_transporter-like_ATP-bd"/>
</dbReference>
<dbReference type="InterPro" id="IPR017871">
    <property type="entry name" value="ABC_transporter-like_CS"/>
</dbReference>
<dbReference type="InterPro" id="IPR050173">
    <property type="entry name" value="ABC_transporter_C-like"/>
</dbReference>
<dbReference type="InterPro" id="IPR027417">
    <property type="entry name" value="P-loop_NTPase"/>
</dbReference>
<dbReference type="InterPro" id="IPR056227">
    <property type="entry name" value="TMD0_ABC"/>
</dbReference>
<dbReference type="PANTHER" id="PTHR24223">
    <property type="entry name" value="ATP-BINDING CASSETTE SUB-FAMILY C"/>
    <property type="match status" value="1"/>
</dbReference>
<dbReference type="PANTHER" id="PTHR24223:SF339">
    <property type="entry name" value="ATP-BINDING CASSETTE SUB-FAMILY C MEMBER 6"/>
    <property type="match status" value="1"/>
</dbReference>
<dbReference type="Pfam" id="PF00664">
    <property type="entry name" value="ABC_membrane"/>
    <property type="match status" value="2"/>
</dbReference>
<dbReference type="Pfam" id="PF00005">
    <property type="entry name" value="ABC_tran"/>
    <property type="match status" value="2"/>
</dbReference>
<dbReference type="Pfam" id="PF24357">
    <property type="entry name" value="TMD0_ABC"/>
    <property type="match status" value="1"/>
</dbReference>
<dbReference type="SMART" id="SM00382">
    <property type="entry name" value="AAA"/>
    <property type="match status" value="2"/>
</dbReference>
<dbReference type="SUPFAM" id="SSF90123">
    <property type="entry name" value="ABC transporter transmembrane region"/>
    <property type="match status" value="2"/>
</dbReference>
<dbReference type="SUPFAM" id="SSF52540">
    <property type="entry name" value="P-loop containing nucleoside triphosphate hydrolases"/>
    <property type="match status" value="2"/>
</dbReference>
<dbReference type="PROSITE" id="PS50929">
    <property type="entry name" value="ABC_TM1F"/>
    <property type="match status" value="2"/>
</dbReference>
<dbReference type="PROSITE" id="PS00211">
    <property type="entry name" value="ABC_TRANSPORTER_1"/>
    <property type="match status" value="2"/>
</dbReference>
<dbReference type="PROSITE" id="PS50893">
    <property type="entry name" value="ABC_TRANSPORTER_2"/>
    <property type="match status" value="2"/>
</dbReference>